<keyword id="KW-0997">Cell inner membrane</keyword>
<keyword id="KW-1003">Cell membrane</keyword>
<keyword id="KW-0441">Lipid A biosynthesis</keyword>
<keyword id="KW-0444">Lipid biosynthesis</keyword>
<keyword id="KW-0443">Lipid metabolism</keyword>
<keyword id="KW-0448">Lipopolysaccharide biosynthesis</keyword>
<keyword id="KW-0472">Membrane</keyword>
<keyword id="KW-0812">Transmembrane</keyword>
<keyword id="KW-1133">Transmembrane helix</keyword>
<keyword id="KW-0813">Transport</keyword>
<gene>
    <name evidence="1" type="primary">arnE</name>
    <name type="ordered locus">SCH_2303</name>
</gene>
<name>ARNE_SALCH</name>
<protein>
    <recommendedName>
        <fullName evidence="1">Probable 4-amino-4-deoxy-L-arabinose-phosphoundecaprenol flippase subunit ArnE</fullName>
        <shortName evidence="1">L-Ara4N-phosphoundecaprenol flippase subunit ArnE</shortName>
    </recommendedName>
    <alternativeName>
        <fullName evidence="1">Undecaprenyl phosphate-aminoarabinose flippase subunit ArnE</fullName>
    </alternativeName>
</protein>
<accession>Q57M53</accession>
<organism>
    <name type="scientific">Salmonella choleraesuis (strain SC-B67)</name>
    <dbReference type="NCBI Taxonomy" id="321314"/>
    <lineage>
        <taxon>Bacteria</taxon>
        <taxon>Pseudomonadati</taxon>
        <taxon>Pseudomonadota</taxon>
        <taxon>Gammaproteobacteria</taxon>
        <taxon>Enterobacterales</taxon>
        <taxon>Enterobacteriaceae</taxon>
        <taxon>Salmonella</taxon>
    </lineage>
</organism>
<reference key="1">
    <citation type="journal article" date="2005" name="Nucleic Acids Res.">
        <title>The genome sequence of Salmonella enterica serovar Choleraesuis, a highly invasive and resistant zoonotic pathogen.</title>
        <authorList>
            <person name="Chiu C.-H."/>
            <person name="Tang P."/>
            <person name="Chu C."/>
            <person name="Hu S."/>
            <person name="Bao Q."/>
            <person name="Yu J."/>
            <person name="Chou Y.-Y."/>
            <person name="Wang H.-S."/>
            <person name="Lee Y.-S."/>
        </authorList>
    </citation>
    <scope>NUCLEOTIDE SEQUENCE [LARGE SCALE GENOMIC DNA]</scope>
    <source>
        <strain>SC-B67</strain>
    </source>
</reference>
<dbReference type="EMBL" id="AE017220">
    <property type="protein sequence ID" value="AAX66209.1"/>
    <property type="molecule type" value="Genomic_DNA"/>
</dbReference>
<dbReference type="RefSeq" id="WP_000579485.1">
    <property type="nucleotide sequence ID" value="NC_006905.1"/>
</dbReference>
<dbReference type="SMR" id="Q57M53"/>
<dbReference type="KEGG" id="sec:SCH_2303"/>
<dbReference type="HOGENOM" id="CLU_131462_5_1_6"/>
<dbReference type="UniPathway" id="UPA00030"/>
<dbReference type="Proteomes" id="UP000000538">
    <property type="component" value="Chromosome"/>
</dbReference>
<dbReference type="GO" id="GO:0005886">
    <property type="term" value="C:plasma membrane"/>
    <property type="evidence" value="ECO:0007669"/>
    <property type="project" value="UniProtKB-SubCell"/>
</dbReference>
<dbReference type="GO" id="GO:1901505">
    <property type="term" value="F:carbohydrate derivative transmembrane transporter activity"/>
    <property type="evidence" value="ECO:0007669"/>
    <property type="project" value="InterPro"/>
</dbReference>
<dbReference type="GO" id="GO:0009245">
    <property type="term" value="P:lipid A biosynthetic process"/>
    <property type="evidence" value="ECO:0007669"/>
    <property type="project" value="UniProtKB-UniRule"/>
</dbReference>
<dbReference type="GO" id="GO:0009103">
    <property type="term" value="P:lipopolysaccharide biosynthetic process"/>
    <property type="evidence" value="ECO:0007669"/>
    <property type="project" value="UniProtKB-UniRule"/>
</dbReference>
<dbReference type="FunFam" id="1.10.3730.20:FF:000002">
    <property type="entry name" value="Probable 4-amino-4-deoxy-L-arabinose-phosphoundecaprenol flippase subunit ArnE"/>
    <property type="match status" value="1"/>
</dbReference>
<dbReference type="Gene3D" id="1.10.3730.20">
    <property type="match status" value="1"/>
</dbReference>
<dbReference type="HAMAP" id="MF_01869">
    <property type="entry name" value="Flippase_ArnE"/>
    <property type="match status" value="1"/>
</dbReference>
<dbReference type="InterPro" id="IPR000620">
    <property type="entry name" value="EamA_dom"/>
</dbReference>
<dbReference type="InterPro" id="IPR022883">
    <property type="entry name" value="Flippase_ArnE"/>
</dbReference>
<dbReference type="InterPro" id="IPR000390">
    <property type="entry name" value="Small_drug/metabolite_transptr"/>
</dbReference>
<dbReference type="NCBIfam" id="NF011625">
    <property type="entry name" value="PRK15051.1"/>
    <property type="match status" value="1"/>
</dbReference>
<dbReference type="PANTHER" id="PTHR30561:SF23">
    <property type="entry name" value="4-AMINO-4-DEOXY-L-ARABINOSE-PHOSPHOUNDECAPRENOL FLIPPASE SUBUNIT ARNE-RELATED"/>
    <property type="match status" value="1"/>
</dbReference>
<dbReference type="PANTHER" id="PTHR30561">
    <property type="entry name" value="SMR FAMILY PROTON-DEPENDENT DRUG EFFLUX TRANSPORTER SUGE"/>
    <property type="match status" value="1"/>
</dbReference>
<dbReference type="Pfam" id="PF00892">
    <property type="entry name" value="EamA"/>
    <property type="match status" value="1"/>
</dbReference>
<dbReference type="SUPFAM" id="SSF103481">
    <property type="entry name" value="Multidrug resistance efflux transporter EmrE"/>
    <property type="match status" value="1"/>
</dbReference>
<proteinExistence type="inferred from homology"/>
<sequence length="111" mass="12188">MIGIVLVLASLLSVGGQLCQKQATRPLTTGRRRRHLMLWLGLALICMGAAMVLWLLVLQTLPVGIAYPMLSLNFVWVTLAAWKIWHEQVPPRHWLGVALIISGIIILGSAA</sequence>
<feature type="chain" id="PRO_0000382991" description="Probable 4-amino-4-deoxy-L-arabinose-phosphoundecaprenol flippase subunit ArnE">
    <location>
        <begin position="1"/>
        <end position="111"/>
    </location>
</feature>
<feature type="transmembrane region" description="Helical" evidence="1">
    <location>
        <begin position="38"/>
        <end position="58"/>
    </location>
</feature>
<feature type="transmembrane region" description="Helical" evidence="1">
    <location>
        <begin position="61"/>
        <end position="81"/>
    </location>
</feature>
<feature type="transmembrane region" description="Helical" evidence="1">
    <location>
        <begin position="91"/>
        <end position="111"/>
    </location>
</feature>
<feature type="domain" description="EamA" evidence="1">
    <location>
        <begin position="40"/>
        <end position="109"/>
    </location>
</feature>
<evidence type="ECO:0000255" key="1">
    <source>
        <dbReference type="HAMAP-Rule" id="MF_01869"/>
    </source>
</evidence>
<comment type="function">
    <text evidence="1">Translocates 4-amino-4-deoxy-L-arabinose-phosphoundecaprenol (alpha-L-Ara4N-phosphoundecaprenol) from the cytoplasmic to the periplasmic side of the inner membrane.</text>
</comment>
<comment type="pathway">
    <text evidence="1">Bacterial outer membrane biogenesis; lipopolysaccharide biosynthesis.</text>
</comment>
<comment type="subunit">
    <text evidence="1">Heterodimer of ArnE and ArnF.</text>
</comment>
<comment type="subcellular location">
    <subcellularLocation>
        <location evidence="1">Cell inner membrane</location>
        <topology evidence="1">Multi-pass membrane protein</topology>
    </subcellularLocation>
</comment>
<comment type="similarity">
    <text evidence="1">Belongs to the ArnE family.</text>
</comment>